<protein>
    <recommendedName>
        <fullName evidence="1">tRNA-2-methylthio-N(6)-dimethylallyladenosine synthase</fullName>
        <ecNumber evidence="1">2.8.4.3</ecNumber>
    </recommendedName>
    <alternativeName>
        <fullName evidence="1">(Dimethylallyl)adenosine tRNA methylthiotransferase MiaB</fullName>
    </alternativeName>
    <alternativeName>
        <fullName evidence="1">tRNA-i(6)A37 methylthiotransferase</fullName>
    </alternativeName>
</protein>
<proteinExistence type="inferred from homology"/>
<sequence>MTKKLHIKTWGCQMNEYDSSKMADLLDATHGYQLTDVAEEADVLLLNTCSIREKAQEKVFHQLGRWKLLKEKNPDLIIGVGGCVASQEGEHIRQRAHYVDIIFGPQTLHRLPEMINSVRGDRSPVVDISFPEIEKFDRLPEPRAEGPTAFVSIMEGCNKYCTYCVVPYTRGEEVSRPSDDILFEIAQLAAQGVREVNLLGQNVNAWRGENYDGTTGSFADLLRLVAAIDGIDRIRFTTSHPIEFTDDIIEVYRDTPELVSFLHLPVQSGSDRILNLMGRTHTALEYKAIIRKLRAARPDIQISSDFIVGFPGETTEDFEKTMKLIADVNFDMSYSFIFSARPGTPAADMVDDVPEEEKKQRLYILQERINQQAMAWSRRMLGTTQRILVEGTSRKSIMELSGRTENNRVVNFEGTPDMIGKFVDVEITDVYPNSLRGKVVRTEDEMGLRVAETPESVIARTRKENDLGVGYYQP</sequence>
<keyword id="KW-0004">4Fe-4S</keyword>
<keyword id="KW-0963">Cytoplasm</keyword>
<keyword id="KW-0408">Iron</keyword>
<keyword id="KW-0411">Iron-sulfur</keyword>
<keyword id="KW-0479">Metal-binding</keyword>
<keyword id="KW-0949">S-adenosyl-L-methionine</keyword>
<keyword id="KW-0808">Transferase</keyword>
<keyword id="KW-0819">tRNA processing</keyword>
<reference key="1">
    <citation type="journal article" date="2008" name="J. Bacteriol.">
        <title>The pangenome structure of Escherichia coli: comparative genomic analysis of E. coli commensal and pathogenic isolates.</title>
        <authorList>
            <person name="Rasko D.A."/>
            <person name="Rosovitz M.J."/>
            <person name="Myers G.S.A."/>
            <person name="Mongodin E.F."/>
            <person name="Fricke W.F."/>
            <person name="Gajer P."/>
            <person name="Crabtree J."/>
            <person name="Sebaihia M."/>
            <person name="Thomson N.R."/>
            <person name="Chaudhuri R."/>
            <person name="Henderson I.R."/>
            <person name="Sperandio V."/>
            <person name="Ravel J."/>
        </authorList>
    </citation>
    <scope>NUCLEOTIDE SEQUENCE [LARGE SCALE GENOMIC DNA]</scope>
    <source>
        <strain>HS</strain>
    </source>
</reference>
<name>MIAB_ECOHS</name>
<organism>
    <name type="scientific">Escherichia coli O9:H4 (strain HS)</name>
    <dbReference type="NCBI Taxonomy" id="331112"/>
    <lineage>
        <taxon>Bacteria</taxon>
        <taxon>Pseudomonadati</taxon>
        <taxon>Pseudomonadota</taxon>
        <taxon>Gammaproteobacteria</taxon>
        <taxon>Enterobacterales</taxon>
        <taxon>Enterobacteriaceae</taxon>
        <taxon>Escherichia</taxon>
    </lineage>
</organism>
<feature type="chain" id="PRO_0000374296" description="tRNA-2-methylthio-N(6)-dimethylallyladenosine synthase">
    <location>
        <begin position="1"/>
        <end position="474"/>
    </location>
</feature>
<feature type="domain" description="MTTase N-terminal" evidence="1">
    <location>
        <begin position="3"/>
        <end position="120"/>
    </location>
</feature>
<feature type="domain" description="Radical SAM core" evidence="2">
    <location>
        <begin position="143"/>
        <end position="375"/>
    </location>
</feature>
<feature type="domain" description="TRAM" evidence="1">
    <location>
        <begin position="378"/>
        <end position="441"/>
    </location>
</feature>
<feature type="binding site" evidence="1">
    <location>
        <position position="12"/>
    </location>
    <ligand>
        <name>[4Fe-4S] cluster</name>
        <dbReference type="ChEBI" id="CHEBI:49883"/>
        <label>1</label>
    </ligand>
</feature>
<feature type="binding site" evidence="1">
    <location>
        <position position="49"/>
    </location>
    <ligand>
        <name>[4Fe-4S] cluster</name>
        <dbReference type="ChEBI" id="CHEBI:49883"/>
        <label>1</label>
    </ligand>
</feature>
<feature type="binding site" evidence="1">
    <location>
        <position position="83"/>
    </location>
    <ligand>
        <name>[4Fe-4S] cluster</name>
        <dbReference type="ChEBI" id="CHEBI:49883"/>
        <label>1</label>
    </ligand>
</feature>
<feature type="binding site" evidence="1">
    <location>
        <position position="157"/>
    </location>
    <ligand>
        <name>[4Fe-4S] cluster</name>
        <dbReference type="ChEBI" id="CHEBI:49883"/>
        <label>2</label>
        <note>4Fe-4S-S-AdoMet</note>
    </ligand>
</feature>
<feature type="binding site" evidence="1">
    <location>
        <position position="161"/>
    </location>
    <ligand>
        <name>[4Fe-4S] cluster</name>
        <dbReference type="ChEBI" id="CHEBI:49883"/>
        <label>2</label>
        <note>4Fe-4S-S-AdoMet</note>
    </ligand>
</feature>
<feature type="binding site" evidence="1">
    <location>
        <position position="164"/>
    </location>
    <ligand>
        <name>[4Fe-4S] cluster</name>
        <dbReference type="ChEBI" id="CHEBI:49883"/>
        <label>2</label>
        <note>4Fe-4S-S-AdoMet</note>
    </ligand>
</feature>
<dbReference type="EC" id="2.8.4.3" evidence="1"/>
<dbReference type="EMBL" id="CP000802">
    <property type="protein sequence ID" value="ABV05084.1"/>
    <property type="molecule type" value="Genomic_DNA"/>
</dbReference>
<dbReference type="RefSeq" id="WP_000162740.1">
    <property type="nucleotide sequence ID" value="NC_009800.1"/>
</dbReference>
<dbReference type="SMR" id="A7ZXT0"/>
<dbReference type="GeneID" id="86863171"/>
<dbReference type="KEGG" id="ecx:EcHS_A0708"/>
<dbReference type="HOGENOM" id="CLU_018697_2_0_6"/>
<dbReference type="GO" id="GO:0005829">
    <property type="term" value="C:cytosol"/>
    <property type="evidence" value="ECO:0007669"/>
    <property type="project" value="TreeGrafter"/>
</dbReference>
<dbReference type="GO" id="GO:0051539">
    <property type="term" value="F:4 iron, 4 sulfur cluster binding"/>
    <property type="evidence" value="ECO:0007669"/>
    <property type="project" value="UniProtKB-UniRule"/>
</dbReference>
<dbReference type="GO" id="GO:0046872">
    <property type="term" value="F:metal ion binding"/>
    <property type="evidence" value="ECO:0007669"/>
    <property type="project" value="UniProtKB-KW"/>
</dbReference>
<dbReference type="GO" id="GO:0035597">
    <property type="term" value="F:N6-isopentenyladenosine methylthiotransferase activity"/>
    <property type="evidence" value="ECO:0007669"/>
    <property type="project" value="TreeGrafter"/>
</dbReference>
<dbReference type="CDD" id="cd01335">
    <property type="entry name" value="Radical_SAM"/>
    <property type="match status" value="1"/>
</dbReference>
<dbReference type="FunFam" id="3.40.50.12160:FF:000001">
    <property type="entry name" value="tRNA-2-methylthio-N(6)-dimethylallyladenosine synthase"/>
    <property type="match status" value="1"/>
</dbReference>
<dbReference type="FunFam" id="3.80.30.20:FF:000001">
    <property type="entry name" value="tRNA-2-methylthio-N(6)-dimethylallyladenosine synthase 2"/>
    <property type="match status" value="1"/>
</dbReference>
<dbReference type="Gene3D" id="3.40.50.12160">
    <property type="entry name" value="Methylthiotransferase, N-terminal domain"/>
    <property type="match status" value="1"/>
</dbReference>
<dbReference type="Gene3D" id="3.80.30.20">
    <property type="entry name" value="tm_1862 like domain"/>
    <property type="match status" value="1"/>
</dbReference>
<dbReference type="HAMAP" id="MF_01864">
    <property type="entry name" value="tRNA_metthiotr_MiaB"/>
    <property type="match status" value="1"/>
</dbReference>
<dbReference type="InterPro" id="IPR006638">
    <property type="entry name" value="Elp3/MiaA/NifB-like_rSAM"/>
</dbReference>
<dbReference type="InterPro" id="IPR005839">
    <property type="entry name" value="Methylthiotransferase"/>
</dbReference>
<dbReference type="InterPro" id="IPR020612">
    <property type="entry name" value="Methylthiotransferase_CS"/>
</dbReference>
<dbReference type="InterPro" id="IPR013848">
    <property type="entry name" value="Methylthiotransferase_N"/>
</dbReference>
<dbReference type="InterPro" id="IPR038135">
    <property type="entry name" value="Methylthiotransferase_N_sf"/>
</dbReference>
<dbReference type="InterPro" id="IPR006463">
    <property type="entry name" value="MiaB_methiolase"/>
</dbReference>
<dbReference type="InterPro" id="IPR007197">
    <property type="entry name" value="rSAM"/>
</dbReference>
<dbReference type="InterPro" id="IPR023404">
    <property type="entry name" value="rSAM_horseshoe"/>
</dbReference>
<dbReference type="InterPro" id="IPR002792">
    <property type="entry name" value="TRAM_dom"/>
</dbReference>
<dbReference type="NCBIfam" id="TIGR01574">
    <property type="entry name" value="miaB-methiolase"/>
    <property type="match status" value="1"/>
</dbReference>
<dbReference type="NCBIfam" id="TIGR00089">
    <property type="entry name" value="MiaB/RimO family radical SAM methylthiotransferase"/>
    <property type="match status" value="1"/>
</dbReference>
<dbReference type="PANTHER" id="PTHR43020">
    <property type="entry name" value="CDK5 REGULATORY SUBUNIT-ASSOCIATED PROTEIN 1"/>
    <property type="match status" value="1"/>
</dbReference>
<dbReference type="PANTHER" id="PTHR43020:SF2">
    <property type="entry name" value="MITOCHONDRIAL TRNA METHYLTHIOTRANSFERASE CDK5RAP1"/>
    <property type="match status" value="1"/>
</dbReference>
<dbReference type="Pfam" id="PF04055">
    <property type="entry name" value="Radical_SAM"/>
    <property type="match status" value="1"/>
</dbReference>
<dbReference type="Pfam" id="PF01938">
    <property type="entry name" value="TRAM"/>
    <property type="match status" value="1"/>
</dbReference>
<dbReference type="Pfam" id="PF00919">
    <property type="entry name" value="UPF0004"/>
    <property type="match status" value="1"/>
</dbReference>
<dbReference type="SFLD" id="SFLDF00273">
    <property type="entry name" value="(dimethylallyl)adenosine_tRNA"/>
    <property type="match status" value="1"/>
</dbReference>
<dbReference type="SFLD" id="SFLDG01082">
    <property type="entry name" value="B12-binding_domain_containing"/>
    <property type="match status" value="1"/>
</dbReference>
<dbReference type="SFLD" id="SFLDS00029">
    <property type="entry name" value="Radical_SAM"/>
    <property type="match status" value="1"/>
</dbReference>
<dbReference type="SMART" id="SM00729">
    <property type="entry name" value="Elp3"/>
    <property type="match status" value="1"/>
</dbReference>
<dbReference type="SUPFAM" id="SSF102114">
    <property type="entry name" value="Radical SAM enzymes"/>
    <property type="match status" value="1"/>
</dbReference>
<dbReference type="PROSITE" id="PS51449">
    <property type="entry name" value="MTTASE_N"/>
    <property type="match status" value="1"/>
</dbReference>
<dbReference type="PROSITE" id="PS01278">
    <property type="entry name" value="MTTASE_RADICAL"/>
    <property type="match status" value="1"/>
</dbReference>
<dbReference type="PROSITE" id="PS51918">
    <property type="entry name" value="RADICAL_SAM"/>
    <property type="match status" value="1"/>
</dbReference>
<dbReference type="PROSITE" id="PS50926">
    <property type="entry name" value="TRAM"/>
    <property type="match status" value="1"/>
</dbReference>
<accession>A7ZXT0</accession>
<evidence type="ECO:0000255" key="1">
    <source>
        <dbReference type="HAMAP-Rule" id="MF_01864"/>
    </source>
</evidence>
<evidence type="ECO:0000255" key="2">
    <source>
        <dbReference type="PROSITE-ProRule" id="PRU01266"/>
    </source>
</evidence>
<comment type="function">
    <text evidence="1">Catalyzes the methylthiolation of N6-(dimethylallyl)adenosine (i(6)A), leading to the formation of 2-methylthio-N6-(dimethylallyl)adenosine (ms(2)i(6)A) at position 37 in tRNAs that read codons beginning with uridine.</text>
</comment>
<comment type="catalytic activity">
    <reaction evidence="1">
        <text>N(6)-dimethylallyladenosine(37) in tRNA + (sulfur carrier)-SH + AH2 + 2 S-adenosyl-L-methionine = 2-methylsulfanyl-N(6)-dimethylallyladenosine(37) in tRNA + (sulfur carrier)-H + 5'-deoxyadenosine + L-methionine + A + S-adenosyl-L-homocysteine + 2 H(+)</text>
        <dbReference type="Rhea" id="RHEA:37067"/>
        <dbReference type="Rhea" id="RHEA-COMP:10375"/>
        <dbReference type="Rhea" id="RHEA-COMP:10376"/>
        <dbReference type="Rhea" id="RHEA-COMP:14737"/>
        <dbReference type="Rhea" id="RHEA-COMP:14739"/>
        <dbReference type="ChEBI" id="CHEBI:13193"/>
        <dbReference type="ChEBI" id="CHEBI:15378"/>
        <dbReference type="ChEBI" id="CHEBI:17319"/>
        <dbReference type="ChEBI" id="CHEBI:17499"/>
        <dbReference type="ChEBI" id="CHEBI:29917"/>
        <dbReference type="ChEBI" id="CHEBI:57844"/>
        <dbReference type="ChEBI" id="CHEBI:57856"/>
        <dbReference type="ChEBI" id="CHEBI:59789"/>
        <dbReference type="ChEBI" id="CHEBI:64428"/>
        <dbReference type="ChEBI" id="CHEBI:74415"/>
        <dbReference type="ChEBI" id="CHEBI:74417"/>
        <dbReference type="EC" id="2.8.4.3"/>
    </reaction>
</comment>
<comment type="cofactor">
    <cofactor evidence="1">
        <name>[4Fe-4S] cluster</name>
        <dbReference type="ChEBI" id="CHEBI:49883"/>
    </cofactor>
    <text evidence="1">Binds 2 [4Fe-4S] clusters. One cluster is coordinated with 3 cysteines and an exchangeable S-adenosyl-L-methionine.</text>
</comment>
<comment type="subunit">
    <text evidence="1">Monomer.</text>
</comment>
<comment type="subcellular location">
    <subcellularLocation>
        <location evidence="1">Cytoplasm</location>
    </subcellularLocation>
</comment>
<comment type="similarity">
    <text evidence="1">Belongs to the methylthiotransferase family. MiaB subfamily.</text>
</comment>
<gene>
    <name evidence="1" type="primary">miaB</name>
    <name type="ordered locus">EcHS_A0708</name>
</gene>